<dbReference type="EMBL" id="CP000387">
    <property type="protein sequence ID" value="ABN44218.1"/>
    <property type="molecule type" value="Genomic_DNA"/>
</dbReference>
<dbReference type="RefSeq" id="WP_002895995.1">
    <property type="nucleotide sequence ID" value="NZ_CAXTYR010000004.1"/>
</dbReference>
<dbReference type="RefSeq" id="YP_001034768.1">
    <property type="nucleotide sequence ID" value="NC_009009.1"/>
</dbReference>
<dbReference type="SMR" id="A3CM13"/>
<dbReference type="STRING" id="388919.SSA_0787"/>
<dbReference type="KEGG" id="ssa:SSA_0787"/>
<dbReference type="PATRIC" id="fig|388919.9.peg.753"/>
<dbReference type="eggNOG" id="COG0224">
    <property type="taxonomic scope" value="Bacteria"/>
</dbReference>
<dbReference type="HOGENOM" id="CLU_050669_0_1_9"/>
<dbReference type="OrthoDB" id="9812769at2"/>
<dbReference type="Proteomes" id="UP000002148">
    <property type="component" value="Chromosome"/>
</dbReference>
<dbReference type="GO" id="GO:0005886">
    <property type="term" value="C:plasma membrane"/>
    <property type="evidence" value="ECO:0007669"/>
    <property type="project" value="UniProtKB-SubCell"/>
</dbReference>
<dbReference type="GO" id="GO:0045259">
    <property type="term" value="C:proton-transporting ATP synthase complex"/>
    <property type="evidence" value="ECO:0007669"/>
    <property type="project" value="UniProtKB-KW"/>
</dbReference>
<dbReference type="GO" id="GO:0005524">
    <property type="term" value="F:ATP binding"/>
    <property type="evidence" value="ECO:0007669"/>
    <property type="project" value="UniProtKB-UniRule"/>
</dbReference>
<dbReference type="GO" id="GO:0046933">
    <property type="term" value="F:proton-transporting ATP synthase activity, rotational mechanism"/>
    <property type="evidence" value="ECO:0007669"/>
    <property type="project" value="UniProtKB-UniRule"/>
</dbReference>
<dbReference type="GO" id="GO:0042777">
    <property type="term" value="P:proton motive force-driven plasma membrane ATP synthesis"/>
    <property type="evidence" value="ECO:0007669"/>
    <property type="project" value="UniProtKB-UniRule"/>
</dbReference>
<dbReference type="CDD" id="cd12151">
    <property type="entry name" value="F1-ATPase_gamma"/>
    <property type="match status" value="1"/>
</dbReference>
<dbReference type="FunFam" id="3.40.1380.10:FF:000002">
    <property type="entry name" value="ATP synthase gamma chain"/>
    <property type="match status" value="1"/>
</dbReference>
<dbReference type="Gene3D" id="3.40.1380.10">
    <property type="match status" value="1"/>
</dbReference>
<dbReference type="Gene3D" id="1.10.287.80">
    <property type="entry name" value="ATP synthase, gamma subunit, helix hairpin domain"/>
    <property type="match status" value="1"/>
</dbReference>
<dbReference type="HAMAP" id="MF_00815">
    <property type="entry name" value="ATP_synth_gamma_bact"/>
    <property type="match status" value="1"/>
</dbReference>
<dbReference type="InterPro" id="IPR035968">
    <property type="entry name" value="ATP_synth_F1_ATPase_gsu"/>
</dbReference>
<dbReference type="InterPro" id="IPR000131">
    <property type="entry name" value="ATP_synth_F1_gsu"/>
</dbReference>
<dbReference type="InterPro" id="IPR023632">
    <property type="entry name" value="ATP_synth_F1_gsu_CS"/>
</dbReference>
<dbReference type="NCBIfam" id="TIGR01146">
    <property type="entry name" value="ATPsyn_F1gamma"/>
    <property type="match status" value="1"/>
</dbReference>
<dbReference type="NCBIfam" id="NF004147">
    <property type="entry name" value="PRK05621.2-1"/>
    <property type="match status" value="1"/>
</dbReference>
<dbReference type="PANTHER" id="PTHR11693">
    <property type="entry name" value="ATP SYNTHASE GAMMA CHAIN"/>
    <property type="match status" value="1"/>
</dbReference>
<dbReference type="PANTHER" id="PTHR11693:SF22">
    <property type="entry name" value="ATP SYNTHASE SUBUNIT GAMMA, MITOCHONDRIAL"/>
    <property type="match status" value="1"/>
</dbReference>
<dbReference type="Pfam" id="PF00231">
    <property type="entry name" value="ATP-synt"/>
    <property type="match status" value="1"/>
</dbReference>
<dbReference type="PRINTS" id="PR00126">
    <property type="entry name" value="ATPASEGAMMA"/>
</dbReference>
<dbReference type="SUPFAM" id="SSF52943">
    <property type="entry name" value="ATP synthase (F1-ATPase), gamma subunit"/>
    <property type="match status" value="1"/>
</dbReference>
<dbReference type="PROSITE" id="PS00153">
    <property type="entry name" value="ATPASE_GAMMA"/>
    <property type="match status" value="1"/>
</dbReference>
<feature type="chain" id="PRO_1000053355" description="ATP synthase gamma chain">
    <location>
        <begin position="1"/>
        <end position="293"/>
    </location>
</feature>
<gene>
    <name evidence="1" type="primary">atpG</name>
    <name type="ordered locus">SSA_0787</name>
</gene>
<evidence type="ECO:0000255" key="1">
    <source>
        <dbReference type="HAMAP-Rule" id="MF_00815"/>
    </source>
</evidence>
<comment type="function">
    <text evidence="1">Produces ATP from ADP in the presence of a proton gradient across the membrane. The gamma chain is believed to be important in regulating ATPase activity and the flow of protons through the CF(0) complex.</text>
</comment>
<comment type="subunit">
    <text evidence="1">F-type ATPases have 2 components, CF(1) - the catalytic core - and CF(0) - the membrane proton channel. CF(1) has five subunits: alpha(3), beta(3), gamma(1), delta(1), epsilon(1). CF(0) has three main subunits: a, b and c.</text>
</comment>
<comment type="subcellular location">
    <subcellularLocation>
        <location evidence="1">Cell membrane</location>
        <topology evidence="1">Peripheral membrane protein</topology>
    </subcellularLocation>
</comment>
<comment type="similarity">
    <text evidence="1">Belongs to the ATPase gamma chain family.</text>
</comment>
<reference key="1">
    <citation type="journal article" date="2007" name="J. Bacteriol.">
        <title>Genome of the opportunistic pathogen Streptococcus sanguinis.</title>
        <authorList>
            <person name="Xu P."/>
            <person name="Alves J.M."/>
            <person name="Kitten T."/>
            <person name="Brown A."/>
            <person name="Chen Z."/>
            <person name="Ozaki L.S."/>
            <person name="Manque P."/>
            <person name="Ge X."/>
            <person name="Serrano M.G."/>
            <person name="Puiu D."/>
            <person name="Hendricks S."/>
            <person name="Wang Y."/>
            <person name="Chaplin M.D."/>
            <person name="Akan D."/>
            <person name="Paik S."/>
            <person name="Peterson D.L."/>
            <person name="Macrina F.L."/>
            <person name="Buck G.A."/>
        </authorList>
    </citation>
    <scope>NUCLEOTIDE SEQUENCE [LARGE SCALE GENOMIC DNA]</scope>
    <source>
        <strain>SK36</strain>
    </source>
</reference>
<accession>A3CM13</accession>
<keyword id="KW-0066">ATP synthesis</keyword>
<keyword id="KW-1003">Cell membrane</keyword>
<keyword id="KW-0139">CF(1)</keyword>
<keyword id="KW-0375">Hydrogen ion transport</keyword>
<keyword id="KW-0406">Ion transport</keyword>
<keyword id="KW-0472">Membrane</keyword>
<keyword id="KW-1185">Reference proteome</keyword>
<keyword id="KW-0813">Transport</keyword>
<proteinExistence type="inferred from homology"/>
<name>ATPG_STRSV</name>
<organism>
    <name type="scientific">Streptococcus sanguinis (strain SK36)</name>
    <dbReference type="NCBI Taxonomy" id="388919"/>
    <lineage>
        <taxon>Bacteria</taxon>
        <taxon>Bacillati</taxon>
        <taxon>Bacillota</taxon>
        <taxon>Bacilli</taxon>
        <taxon>Lactobacillales</taxon>
        <taxon>Streptococcaceae</taxon>
        <taxon>Streptococcus</taxon>
    </lineage>
</organism>
<sequence length="293" mass="32541">MAVSLNDIKNKIASTKNTSQITNAMQMVSAAKLGKSEEAAKNFQVYAQKVRKLVTDMLHGHEAENARHHSMLISRPVKKSAYIVITSDRGLVGGYNATILKALMELKAEYHPTGEDFEVICIGSVGADFFRARGIQPVYELRGLADQPSFDEVRKIISKTIEMYQNELFDELYVCYNHHVNSLTSQMRVEQMLPIIDLDPNEADEDYTLNLELESSRDSILDQLLPQFAESMIYGAIIDAKTAENAAGMTAMQTATDNAKKVISDLTIQYNRARQAAITQEITEIVAGASALE</sequence>
<protein>
    <recommendedName>
        <fullName evidence="1">ATP synthase gamma chain</fullName>
    </recommendedName>
    <alternativeName>
        <fullName evidence="1">ATP synthase F1 sector gamma subunit</fullName>
    </alternativeName>
    <alternativeName>
        <fullName evidence="1">F-ATPase gamma subunit</fullName>
    </alternativeName>
</protein>